<sequence length="302" mass="33242">MYRELISHKIAELKKERKAIILAHNYQLGEIQDAADFVGDSLELARKAAKVDAGVIVFCGVHFMAETAAILSPEKIVLAPEPRAGCPMADMISGAELREFKSRHPGLPVVCYVNSTAEVKAESDICCTSANAVKVVESLKSDTVLFVPDQYLGAFVKERTSKKIISWPGYCPSHARIKPEDIVNLKKHYPAARVIVHPESRPEVTALADEVLSTGQMVSYATRADVKELIVGTEIGMLYRLRKENPDKLFIPVSEQAVCANMKMTTLPKLLASLENMQTVVSVPEEIRVKAVGAVERMLRVV</sequence>
<comment type="function">
    <text evidence="1">Catalyzes the condensation of iminoaspartate with dihydroxyacetone phosphate to form quinolinate.</text>
</comment>
<comment type="catalytic activity">
    <reaction evidence="1">
        <text>iminosuccinate + dihydroxyacetone phosphate = quinolinate + phosphate + 2 H2O + H(+)</text>
        <dbReference type="Rhea" id="RHEA:25888"/>
        <dbReference type="ChEBI" id="CHEBI:15377"/>
        <dbReference type="ChEBI" id="CHEBI:15378"/>
        <dbReference type="ChEBI" id="CHEBI:29959"/>
        <dbReference type="ChEBI" id="CHEBI:43474"/>
        <dbReference type="ChEBI" id="CHEBI:57642"/>
        <dbReference type="ChEBI" id="CHEBI:77875"/>
        <dbReference type="EC" id="2.5.1.72"/>
    </reaction>
    <physiologicalReaction direction="left-to-right" evidence="1">
        <dbReference type="Rhea" id="RHEA:25889"/>
    </physiologicalReaction>
</comment>
<comment type="cofactor">
    <cofactor evidence="1">
        <name>[4Fe-4S] cluster</name>
        <dbReference type="ChEBI" id="CHEBI:49883"/>
    </cofactor>
    <text evidence="1">Binds 1 [4Fe-4S] cluster per subunit.</text>
</comment>
<comment type="pathway">
    <text evidence="1">Cofactor biosynthesis; NAD(+) biosynthesis; quinolinate from iminoaspartate: step 1/1.</text>
</comment>
<comment type="subcellular location">
    <subcellularLocation>
        <location evidence="1">Cytoplasm</location>
    </subcellularLocation>
</comment>
<comment type="similarity">
    <text evidence="1">Belongs to the quinolinate synthase family. Type 2 subfamily.</text>
</comment>
<accession>A5FPF7</accession>
<protein>
    <recommendedName>
        <fullName evidence="1">Quinolinate synthase</fullName>
        <ecNumber evidence="1">2.5.1.72</ecNumber>
    </recommendedName>
</protein>
<proteinExistence type="inferred from homology"/>
<gene>
    <name evidence="1" type="primary">nadA</name>
    <name type="ordered locus">DehaBAV1_1338</name>
</gene>
<evidence type="ECO:0000255" key="1">
    <source>
        <dbReference type="HAMAP-Rule" id="MF_00568"/>
    </source>
</evidence>
<keyword id="KW-0004">4Fe-4S</keyword>
<keyword id="KW-0963">Cytoplasm</keyword>
<keyword id="KW-0408">Iron</keyword>
<keyword id="KW-0411">Iron-sulfur</keyword>
<keyword id="KW-0479">Metal-binding</keyword>
<keyword id="KW-0662">Pyridine nucleotide biosynthesis</keyword>
<keyword id="KW-0808">Transferase</keyword>
<organism>
    <name type="scientific">Dehalococcoides mccartyi (strain ATCC BAA-2100 / JCM 16839 / KCTC 5957 / BAV1)</name>
    <dbReference type="NCBI Taxonomy" id="216389"/>
    <lineage>
        <taxon>Bacteria</taxon>
        <taxon>Bacillati</taxon>
        <taxon>Chloroflexota</taxon>
        <taxon>Dehalococcoidia</taxon>
        <taxon>Dehalococcoidales</taxon>
        <taxon>Dehalococcoidaceae</taxon>
        <taxon>Dehalococcoides</taxon>
    </lineage>
</organism>
<name>NADA_DEHMB</name>
<dbReference type="EC" id="2.5.1.72" evidence="1"/>
<dbReference type="EMBL" id="CP000688">
    <property type="protein sequence ID" value="ABQ17915.1"/>
    <property type="molecule type" value="Genomic_DNA"/>
</dbReference>
<dbReference type="SMR" id="A5FPF7"/>
<dbReference type="KEGG" id="deb:DehaBAV1_1338"/>
<dbReference type="PATRIC" id="fig|216389.18.peg.1411"/>
<dbReference type="HOGENOM" id="CLU_047382_0_0_0"/>
<dbReference type="UniPathway" id="UPA00253">
    <property type="reaction ID" value="UER00327"/>
</dbReference>
<dbReference type="GO" id="GO:0005737">
    <property type="term" value="C:cytoplasm"/>
    <property type="evidence" value="ECO:0007669"/>
    <property type="project" value="UniProtKB-SubCell"/>
</dbReference>
<dbReference type="GO" id="GO:0051539">
    <property type="term" value="F:4 iron, 4 sulfur cluster binding"/>
    <property type="evidence" value="ECO:0007669"/>
    <property type="project" value="UniProtKB-KW"/>
</dbReference>
<dbReference type="GO" id="GO:0046872">
    <property type="term" value="F:metal ion binding"/>
    <property type="evidence" value="ECO:0007669"/>
    <property type="project" value="UniProtKB-KW"/>
</dbReference>
<dbReference type="GO" id="GO:0008987">
    <property type="term" value="F:quinolinate synthetase A activity"/>
    <property type="evidence" value="ECO:0007669"/>
    <property type="project" value="UniProtKB-UniRule"/>
</dbReference>
<dbReference type="GO" id="GO:0034628">
    <property type="term" value="P:'de novo' NAD biosynthetic process from L-aspartate"/>
    <property type="evidence" value="ECO:0007669"/>
    <property type="project" value="TreeGrafter"/>
</dbReference>
<dbReference type="FunFam" id="3.40.50.10800:FF:000003">
    <property type="entry name" value="Quinolinate synthase A"/>
    <property type="match status" value="1"/>
</dbReference>
<dbReference type="Gene3D" id="3.40.50.10800">
    <property type="entry name" value="NadA-like"/>
    <property type="match status" value="3"/>
</dbReference>
<dbReference type="HAMAP" id="MF_00568">
    <property type="entry name" value="NadA_type2"/>
    <property type="match status" value="1"/>
</dbReference>
<dbReference type="InterPro" id="IPR003473">
    <property type="entry name" value="NadA"/>
</dbReference>
<dbReference type="InterPro" id="IPR036094">
    <property type="entry name" value="NadA_sf"/>
</dbReference>
<dbReference type="InterPro" id="IPR023066">
    <property type="entry name" value="Quinolinate_synth_type2"/>
</dbReference>
<dbReference type="NCBIfam" id="TIGR00550">
    <property type="entry name" value="nadA"/>
    <property type="match status" value="1"/>
</dbReference>
<dbReference type="NCBIfam" id="NF006878">
    <property type="entry name" value="PRK09375.1-2"/>
    <property type="match status" value="1"/>
</dbReference>
<dbReference type="NCBIfam" id="NF006879">
    <property type="entry name" value="PRK09375.1-4"/>
    <property type="match status" value="1"/>
</dbReference>
<dbReference type="PANTHER" id="PTHR30573:SF0">
    <property type="entry name" value="QUINOLINATE SYNTHASE, CHLOROPLASTIC"/>
    <property type="match status" value="1"/>
</dbReference>
<dbReference type="PANTHER" id="PTHR30573">
    <property type="entry name" value="QUINOLINATE SYNTHETASE A"/>
    <property type="match status" value="1"/>
</dbReference>
<dbReference type="Pfam" id="PF02445">
    <property type="entry name" value="NadA"/>
    <property type="match status" value="1"/>
</dbReference>
<dbReference type="SUPFAM" id="SSF142754">
    <property type="entry name" value="NadA-like"/>
    <property type="match status" value="1"/>
</dbReference>
<reference key="1">
    <citation type="submission" date="2007-05" db="EMBL/GenBank/DDBJ databases">
        <title>Complete sequence of Dehalococcoides sp. BAV1.</title>
        <authorList>
            <consortium name="US DOE Joint Genome Institute"/>
            <person name="Copeland A."/>
            <person name="Lucas S."/>
            <person name="Lapidus A."/>
            <person name="Barry K."/>
            <person name="Detter J.C."/>
            <person name="Glavina del Rio T."/>
            <person name="Hammon N."/>
            <person name="Israni S."/>
            <person name="Pitluck S."/>
            <person name="Lowry S."/>
            <person name="Clum A."/>
            <person name="Schmutz J."/>
            <person name="Larimer F."/>
            <person name="Land M."/>
            <person name="Hauser L."/>
            <person name="Kyrpides N."/>
            <person name="Kim E."/>
            <person name="Ritalahti K.M."/>
            <person name="Loeffler F."/>
            <person name="Richardson P."/>
        </authorList>
    </citation>
    <scope>NUCLEOTIDE SEQUENCE [LARGE SCALE GENOMIC DNA]</scope>
    <source>
        <strain>ATCC BAA-2100 / JCM 16839 / KCTC 5957 / BAV1</strain>
    </source>
</reference>
<feature type="chain" id="PRO_1000082315" description="Quinolinate synthase">
    <location>
        <begin position="1"/>
        <end position="302"/>
    </location>
</feature>
<feature type="binding site" evidence="1">
    <location>
        <position position="24"/>
    </location>
    <ligand>
        <name>iminosuccinate</name>
        <dbReference type="ChEBI" id="CHEBI:77875"/>
    </ligand>
</feature>
<feature type="binding site" evidence="1">
    <location>
        <position position="41"/>
    </location>
    <ligand>
        <name>iminosuccinate</name>
        <dbReference type="ChEBI" id="CHEBI:77875"/>
    </ligand>
</feature>
<feature type="binding site" evidence="1">
    <location>
        <position position="86"/>
    </location>
    <ligand>
        <name>[4Fe-4S] cluster</name>
        <dbReference type="ChEBI" id="CHEBI:49883"/>
    </ligand>
</feature>
<feature type="binding site" evidence="1">
    <location>
        <begin position="112"/>
        <end position="114"/>
    </location>
    <ligand>
        <name>iminosuccinate</name>
        <dbReference type="ChEBI" id="CHEBI:77875"/>
    </ligand>
</feature>
<feature type="binding site" evidence="1">
    <location>
        <position position="129"/>
    </location>
    <ligand>
        <name>iminosuccinate</name>
        <dbReference type="ChEBI" id="CHEBI:77875"/>
    </ligand>
</feature>
<feature type="binding site" evidence="1">
    <location>
        <position position="171"/>
    </location>
    <ligand>
        <name>[4Fe-4S] cluster</name>
        <dbReference type="ChEBI" id="CHEBI:49883"/>
    </ligand>
</feature>
<feature type="binding site" evidence="1">
    <location>
        <begin position="197"/>
        <end position="199"/>
    </location>
    <ligand>
        <name>iminosuccinate</name>
        <dbReference type="ChEBI" id="CHEBI:77875"/>
    </ligand>
</feature>
<feature type="binding site" evidence="1">
    <location>
        <position position="214"/>
    </location>
    <ligand>
        <name>iminosuccinate</name>
        <dbReference type="ChEBI" id="CHEBI:77875"/>
    </ligand>
</feature>
<feature type="binding site" evidence="1">
    <location>
        <position position="259"/>
    </location>
    <ligand>
        <name>[4Fe-4S] cluster</name>
        <dbReference type="ChEBI" id="CHEBI:49883"/>
    </ligand>
</feature>